<dbReference type="EC" id="6.1.1.11" evidence="1"/>
<dbReference type="EMBL" id="CP000036">
    <property type="protein sequence ID" value="ABB65498.1"/>
    <property type="molecule type" value="Genomic_DNA"/>
</dbReference>
<dbReference type="RefSeq" id="WP_000886683.1">
    <property type="nucleotide sequence ID" value="NC_007613.1"/>
</dbReference>
<dbReference type="SMR" id="Q323L0"/>
<dbReference type="GeneID" id="93776527"/>
<dbReference type="KEGG" id="sbo:SBO_0826"/>
<dbReference type="HOGENOM" id="CLU_023797_1_1_6"/>
<dbReference type="UniPathway" id="UPA00906">
    <property type="reaction ID" value="UER00895"/>
</dbReference>
<dbReference type="Proteomes" id="UP000007067">
    <property type="component" value="Chromosome"/>
</dbReference>
<dbReference type="GO" id="GO:0005737">
    <property type="term" value="C:cytoplasm"/>
    <property type="evidence" value="ECO:0007669"/>
    <property type="project" value="UniProtKB-SubCell"/>
</dbReference>
<dbReference type="GO" id="GO:0005524">
    <property type="term" value="F:ATP binding"/>
    <property type="evidence" value="ECO:0007669"/>
    <property type="project" value="UniProtKB-UniRule"/>
</dbReference>
<dbReference type="GO" id="GO:0004828">
    <property type="term" value="F:serine-tRNA ligase activity"/>
    <property type="evidence" value="ECO:0007669"/>
    <property type="project" value="UniProtKB-UniRule"/>
</dbReference>
<dbReference type="GO" id="GO:0016260">
    <property type="term" value="P:selenocysteine biosynthetic process"/>
    <property type="evidence" value="ECO:0007669"/>
    <property type="project" value="UniProtKB-UniRule"/>
</dbReference>
<dbReference type="GO" id="GO:0006434">
    <property type="term" value="P:seryl-tRNA aminoacylation"/>
    <property type="evidence" value="ECO:0007669"/>
    <property type="project" value="UniProtKB-UniRule"/>
</dbReference>
<dbReference type="CDD" id="cd00770">
    <property type="entry name" value="SerRS_core"/>
    <property type="match status" value="1"/>
</dbReference>
<dbReference type="FunFam" id="1.10.287.40:FF:000001">
    <property type="entry name" value="Serine--tRNA ligase"/>
    <property type="match status" value="1"/>
</dbReference>
<dbReference type="FunFam" id="3.30.930.10:FF:000018">
    <property type="entry name" value="Serine--tRNA ligase"/>
    <property type="match status" value="1"/>
</dbReference>
<dbReference type="Gene3D" id="3.30.930.10">
    <property type="entry name" value="Bira Bifunctional Protein, Domain 2"/>
    <property type="match status" value="1"/>
</dbReference>
<dbReference type="Gene3D" id="1.10.287.40">
    <property type="entry name" value="Serine-tRNA synthetase, tRNA binding domain"/>
    <property type="match status" value="1"/>
</dbReference>
<dbReference type="HAMAP" id="MF_00176">
    <property type="entry name" value="Ser_tRNA_synth_type1"/>
    <property type="match status" value="1"/>
</dbReference>
<dbReference type="InterPro" id="IPR002314">
    <property type="entry name" value="aa-tRNA-synt_IIb"/>
</dbReference>
<dbReference type="InterPro" id="IPR006195">
    <property type="entry name" value="aa-tRNA-synth_II"/>
</dbReference>
<dbReference type="InterPro" id="IPR045864">
    <property type="entry name" value="aa-tRNA-synth_II/BPL/LPL"/>
</dbReference>
<dbReference type="InterPro" id="IPR002317">
    <property type="entry name" value="Ser-tRNA-ligase_type_1"/>
</dbReference>
<dbReference type="InterPro" id="IPR015866">
    <property type="entry name" value="Ser-tRNA-synth_1_N"/>
</dbReference>
<dbReference type="InterPro" id="IPR042103">
    <property type="entry name" value="SerRS_1_N_sf"/>
</dbReference>
<dbReference type="InterPro" id="IPR033729">
    <property type="entry name" value="SerRS_core"/>
</dbReference>
<dbReference type="InterPro" id="IPR010978">
    <property type="entry name" value="tRNA-bd_arm"/>
</dbReference>
<dbReference type="NCBIfam" id="TIGR00414">
    <property type="entry name" value="serS"/>
    <property type="match status" value="1"/>
</dbReference>
<dbReference type="PANTHER" id="PTHR43697:SF1">
    <property type="entry name" value="SERINE--TRNA LIGASE"/>
    <property type="match status" value="1"/>
</dbReference>
<dbReference type="PANTHER" id="PTHR43697">
    <property type="entry name" value="SERYL-TRNA SYNTHETASE"/>
    <property type="match status" value="1"/>
</dbReference>
<dbReference type="Pfam" id="PF02403">
    <property type="entry name" value="Seryl_tRNA_N"/>
    <property type="match status" value="1"/>
</dbReference>
<dbReference type="Pfam" id="PF00587">
    <property type="entry name" value="tRNA-synt_2b"/>
    <property type="match status" value="1"/>
</dbReference>
<dbReference type="PIRSF" id="PIRSF001529">
    <property type="entry name" value="Ser-tRNA-synth_IIa"/>
    <property type="match status" value="1"/>
</dbReference>
<dbReference type="PRINTS" id="PR00981">
    <property type="entry name" value="TRNASYNTHSER"/>
</dbReference>
<dbReference type="SUPFAM" id="SSF55681">
    <property type="entry name" value="Class II aaRS and biotin synthetases"/>
    <property type="match status" value="1"/>
</dbReference>
<dbReference type="SUPFAM" id="SSF46589">
    <property type="entry name" value="tRNA-binding arm"/>
    <property type="match status" value="1"/>
</dbReference>
<dbReference type="PROSITE" id="PS50862">
    <property type="entry name" value="AA_TRNA_LIGASE_II"/>
    <property type="match status" value="1"/>
</dbReference>
<keyword id="KW-0030">Aminoacyl-tRNA synthetase</keyword>
<keyword id="KW-0067">ATP-binding</keyword>
<keyword id="KW-0963">Cytoplasm</keyword>
<keyword id="KW-0436">Ligase</keyword>
<keyword id="KW-0547">Nucleotide-binding</keyword>
<keyword id="KW-0648">Protein biosynthesis</keyword>
<gene>
    <name evidence="1" type="primary">serS</name>
    <name type="ordered locus">SBO_0826</name>
</gene>
<protein>
    <recommendedName>
        <fullName evidence="1">Serine--tRNA ligase</fullName>
        <ecNumber evidence="1">6.1.1.11</ecNumber>
    </recommendedName>
    <alternativeName>
        <fullName evidence="1">Seryl-tRNA synthetase</fullName>
        <shortName evidence="1">SerRS</shortName>
    </alternativeName>
    <alternativeName>
        <fullName evidence="1">Seryl-tRNA(Ser/Sec) synthetase</fullName>
    </alternativeName>
</protein>
<name>SYS_SHIBS</name>
<accession>Q323L0</accession>
<feature type="chain" id="PRO_1000019819" description="Serine--tRNA ligase">
    <location>
        <begin position="1"/>
        <end position="430"/>
    </location>
</feature>
<feature type="binding site" evidence="1">
    <location>
        <begin position="237"/>
        <end position="239"/>
    </location>
    <ligand>
        <name>L-serine</name>
        <dbReference type="ChEBI" id="CHEBI:33384"/>
    </ligand>
</feature>
<feature type="binding site" evidence="1">
    <location>
        <begin position="268"/>
        <end position="270"/>
    </location>
    <ligand>
        <name>ATP</name>
        <dbReference type="ChEBI" id="CHEBI:30616"/>
    </ligand>
</feature>
<feature type="binding site" evidence="1">
    <location>
        <position position="291"/>
    </location>
    <ligand>
        <name>L-serine</name>
        <dbReference type="ChEBI" id="CHEBI:33384"/>
    </ligand>
</feature>
<feature type="binding site" evidence="1">
    <location>
        <begin position="355"/>
        <end position="358"/>
    </location>
    <ligand>
        <name>ATP</name>
        <dbReference type="ChEBI" id="CHEBI:30616"/>
    </ligand>
</feature>
<feature type="binding site" evidence="1">
    <location>
        <position position="391"/>
    </location>
    <ligand>
        <name>L-serine</name>
        <dbReference type="ChEBI" id="CHEBI:33384"/>
    </ligand>
</feature>
<evidence type="ECO:0000255" key="1">
    <source>
        <dbReference type="HAMAP-Rule" id="MF_00176"/>
    </source>
</evidence>
<organism>
    <name type="scientific">Shigella boydii serotype 4 (strain Sb227)</name>
    <dbReference type="NCBI Taxonomy" id="300268"/>
    <lineage>
        <taxon>Bacteria</taxon>
        <taxon>Pseudomonadati</taxon>
        <taxon>Pseudomonadota</taxon>
        <taxon>Gammaproteobacteria</taxon>
        <taxon>Enterobacterales</taxon>
        <taxon>Enterobacteriaceae</taxon>
        <taxon>Shigella</taxon>
    </lineage>
</organism>
<sequence length="430" mass="48414">MLDPNLLRNEPDAVAEKLARRGFKLDVDKLGALEERRKVLQVKTENLQAERNSRSKSIGQAKARGEDIEPLRLEVNKLGEELDAAKAELDALQAEIRDIALTIPNLPADEVPVGKDENDNVEVSRWGTPREFDFEVRDHVTLGEMHSGLDFAAAVKLTGSRFVVMKGQIARMHRALSQFMLDLHTEQHGYSENYVPYLVNQDTLYGTGQLPKFAGDLFHTRPLEEEADTSNYALIPTAEVPLTNLVRGEIIDEDDLPIKMTAHTPCFRSEAGSYGRDTRGLIRMHQFDKVEMVQIVRPEDSMAALEEMTGHAEKVLQLLGLPYRKIILCTGDMGFGACKTYDLEVWIPAQNTYREISSCSNVWDFQARRMQARCRSKSDKKTRLVHTLNGSGLAVGRTLVAVMENYQQADGRIEVPEVLRPYMNGLEYIG</sequence>
<proteinExistence type="inferred from homology"/>
<reference key="1">
    <citation type="journal article" date="2005" name="Nucleic Acids Res.">
        <title>Genome dynamics and diversity of Shigella species, the etiologic agents of bacillary dysentery.</title>
        <authorList>
            <person name="Yang F."/>
            <person name="Yang J."/>
            <person name="Zhang X."/>
            <person name="Chen L."/>
            <person name="Jiang Y."/>
            <person name="Yan Y."/>
            <person name="Tang X."/>
            <person name="Wang J."/>
            <person name="Xiong Z."/>
            <person name="Dong J."/>
            <person name="Xue Y."/>
            <person name="Zhu Y."/>
            <person name="Xu X."/>
            <person name="Sun L."/>
            <person name="Chen S."/>
            <person name="Nie H."/>
            <person name="Peng J."/>
            <person name="Xu J."/>
            <person name="Wang Y."/>
            <person name="Yuan Z."/>
            <person name="Wen Y."/>
            <person name="Yao Z."/>
            <person name="Shen Y."/>
            <person name="Qiang B."/>
            <person name="Hou Y."/>
            <person name="Yu J."/>
            <person name="Jin Q."/>
        </authorList>
    </citation>
    <scope>NUCLEOTIDE SEQUENCE [LARGE SCALE GENOMIC DNA]</scope>
    <source>
        <strain>Sb227</strain>
    </source>
</reference>
<comment type="function">
    <text evidence="1">Catalyzes the attachment of serine to tRNA(Ser). Is also able to aminoacylate tRNA(Sec) with serine, to form the misacylated tRNA L-seryl-tRNA(Sec), which will be further converted into selenocysteinyl-tRNA(Sec).</text>
</comment>
<comment type="catalytic activity">
    <reaction evidence="1">
        <text>tRNA(Ser) + L-serine + ATP = L-seryl-tRNA(Ser) + AMP + diphosphate + H(+)</text>
        <dbReference type="Rhea" id="RHEA:12292"/>
        <dbReference type="Rhea" id="RHEA-COMP:9669"/>
        <dbReference type="Rhea" id="RHEA-COMP:9703"/>
        <dbReference type="ChEBI" id="CHEBI:15378"/>
        <dbReference type="ChEBI" id="CHEBI:30616"/>
        <dbReference type="ChEBI" id="CHEBI:33019"/>
        <dbReference type="ChEBI" id="CHEBI:33384"/>
        <dbReference type="ChEBI" id="CHEBI:78442"/>
        <dbReference type="ChEBI" id="CHEBI:78533"/>
        <dbReference type="ChEBI" id="CHEBI:456215"/>
        <dbReference type="EC" id="6.1.1.11"/>
    </reaction>
</comment>
<comment type="catalytic activity">
    <reaction evidence="1">
        <text>tRNA(Sec) + L-serine + ATP = L-seryl-tRNA(Sec) + AMP + diphosphate + H(+)</text>
        <dbReference type="Rhea" id="RHEA:42580"/>
        <dbReference type="Rhea" id="RHEA-COMP:9742"/>
        <dbReference type="Rhea" id="RHEA-COMP:10128"/>
        <dbReference type="ChEBI" id="CHEBI:15378"/>
        <dbReference type="ChEBI" id="CHEBI:30616"/>
        <dbReference type="ChEBI" id="CHEBI:33019"/>
        <dbReference type="ChEBI" id="CHEBI:33384"/>
        <dbReference type="ChEBI" id="CHEBI:78442"/>
        <dbReference type="ChEBI" id="CHEBI:78533"/>
        <dbReference type="ChEBI" id="CHEBI:456215"/>
        <dbReference type="EC" id="6.1.1.11"/>
    </reaction>
</comment>
<comment type="pathway">
    <text evidence="1">Aminoacyl-tRNA biosynthesis; selenocysteinyl-tRNA(Sec) biosynthesis; L-seryl-tRNA(Sec) from L-serine and tRNA(Sec): step 1/1.</text>
</comment>
<comment type="subunit">
    <text evidence="1">Homodimer. The tRNA molecule binds across the dimer.</text>
</comment>
<comment type="subcellular location">
    <subcellularLocation>
        <location evidence="1">Cytoplasm</location>
    </subcellularLocation>
</comment>
<comment type="domain">
    <text evidence="1">Consists of two distinct domains, a catalytic core and a N-terminal extension that is involved in tRNA binding.</text>
</comment>
<comment type="similarity">
    <text evidence="1">Belongs to the class-II aminoacyl-tRNA synthetase family. Type-1 seryl-tRNA synthetase subfamily.</text>
</comment>